<accession>Q5P5J6</accession>
<name>RNPH_AROAE</name>
<keyword id="KW-0548">Nucleotidyltransferase</keyword>
<keyword id="KW-1185">Reference proteome</keyword>
<keyword id="KW-0694">RNA-binding</keyword>
<keyword id="KW-0698">rRNA processing</keyword>
<keyword id="KW-0808">Transferase</keyword>
<keyword id="KW-0819">tRNA processing</keyword>
<keyword id="KW-0820">tRNA-binding</keyword>
<evidence type="ECO:0000255" key="1">
    <source>
        <dbReference type="HAMAP-Rule" id="MF_00564"/>
    </source>
</evidence>
<sequence>MRPSQRRPDQLRAVMITRNFTCHAEGSVLVEFGATRVLCTASVEDTVPPFLRGRGQGWLTAEYGMLPRATHTRSAREAAKGKQSGRTQEIQRLIGRSLRAVVDLSALGERQIVIDCDVLQADGGTRTAAITGACVAVHDAFRKLVTEGKLPYSPLREFVAAVSVGMFQGVPVLDLDYAEDSGCDTDMNVVMTGAGGFVEVQGTAEGATFSRAELNALLELAESGIRRLVEAQKAAIDRN</sequence>
<comment type="function">
    <text evidence="1">Phosphorolytic 3'-5' exoribonuclease that plays an important role in tRNA 3'-end maturation. Removes nucleotide residues following the 3'-CCA terminus of tRNAs; can also add nucleotides to the ends of RNA molecules by using nucleoside diphosphates as substrates, but this may not be physiologically important. Probably plays a role in initiation of 16S rRNA degradation (leading to ribosome degradation) during starvation.</text>
</comment>
<comment type="catalytic activity">
    <reaction evidence="1">
        <text>tRNA(n+1) + phosphate = tRNA(n) + a ribonucleoside 5'-diphosphate</text>
        <dbReference type="Rhea" id="RHEA:10628"/>
        <dbReference type="Rhea" id="RHEA-COMP:17343"/>
        <dbReference type="Rhea" id="RHEA-COMP:17344"/>
        <dbReference type="ChEBI" id="CHEBI:43474"/>
        <dbReference type="ChEBI" id="CHEBI:57930"/>
        <dbReference type="ChEBI" id="CHEBI:173114"/>
        <dbReference type="EC" id="2.7.7.56"/>
    </reaction>
</comment>
<comment type="subunit">
    <text evidence="1">Homohexameric ring arranged as a trimer of dimers.</text>
</comment>
<comment type="similarity">
    <text evidence="1">Belongs to the RNase PH family.</text>
</comment>
<organism>
    <name type="scientific">Aromatoleum aromaticum (strain DSM 19018 / LMG 30748 / EbN1)</name>
    <name type="common">Azoarcus sp. (strain EbN1)</name>
    <dbReference type="NCBI Taxonomy" id="76114"/>
    <lineage>
        <taxon>Bacteria</taxon>
        <taxon>Pseudomonadati</taxon>
        <taxon>Pseudomonadota</taxon>
        <taxon>Betaproteobacteria</taxon>
        <taxon>Rhodocyclales</taxon>
        <taxon>Rhodocyclaceae</taxon>
        <taxon>Aromatoleum</taxon>
    </lineage>
</organism>
<reference key="1">
    <citation type="journal article" date="2005" name="Arch. Microbiol.">
        <title>The genome sequence of an anaerobic aromatic-degrading denitrifying bacterium, strain EbN1.</title>
        <authorList>
            <person name="Rabus R."/>
            <person name="Kube M."/>
            <person name="Heider J."/>
            <person name="Beck A."/>
            <person name="Heitmann K."/>
            <person name="Widdel F."/>
            <person name="Reinhardt R."/>
        </authorList>
    </citation>
    <scope>NUCLEOTIDE SEQUENCE [LARGE SCALE GENOMIC DNA]</scope>
    <source>
        <strain>DSM 19018 / LMG 30748 / EbN1</strain>
    </source>
</reference>
<feature type="chain" id="PRO_1000024775" description="Ribonuclease PH">
    <location>
        <begin position="1"/>
        <end position="239"/>
    </location>
</feature>
<feature type="binding site" evidence="1">
    <location>
        <position position="86"/>
    </location>
    <ligand>
        <name>phosphate</name>
        <dbReference type="ChEBI" id="CHEBI:43474"/>
        <note>substrate</note>
    </ligand>
</feature>
<feature type="binding site" evidence="1">
    <location>
        <begin position="124"/>
        <end position="126"/>
    </location>
    <ligand>
        <name>phosphate</name>
        <dbReference type="ChEBI" id="CHEBI:43474"/>
        <note>substrate</note>
    </ligand>
</feature>
<dbReference type="EC" id="2.7.7.56" evidence="1"/>
<dbReference type="EMBL" id="CR555306">
    <property type="protein sequence ID" value="CAI07416.1"/>
    <property type="molecule type" value="Genomic_DNA"/>
</dbReference>
<dbReference type="RefSeq" id="WP_011237136.1">
    <property type="nucleotide sequence ID" value="NC_006513.1"/>
</dbReference>
<dbReference type="SMR" id="Q5P5J6"/>
<dbReference type="STRING" id="76114.c1A232"/>
<dbReference type="KEGG" id="eba:c1A232"/>
<dbReference type="eggNOG" id="COG0689">
    <property type="taxonomic scope" value="Bacteria"/>
</dbReference>
<dbReference type="HOGENOM" id="CLU_050858_0_0_4"/>
<dbReference type="OrthoDB" id="9802265at2"/>
<dbReference type="Proteomes" id="UP000006552">
    <property type="component" value="Chromosome"/>
</dbReference>
<dbReference type="GO" id="GO:0000175">
    <property type="term" value="F:3'-5'-RNA exonuclease activity"/>
    <property type="evidence" value="ECO:0007669"/>
    <property type="project" value="UniProtKB-UniRule"/>
</dbReference>
<dbReference type="GO" id="GO:0000049">
    <property type="term" value="F:tRNA binding"/>
    <property type="evidence" value="ECO:0007669"/>
    <property type="project" value="UniProtKB-UniRule"/>
</dbReference>
<dbReference type="GO" id="GO:0009022">
    <property type="term" value="F:tRNA nucleotidyltransferase activity"/>
    <property type="evidence" value="ECO:0007669"/>
    <property type="project" value="UniProtKB-UniRule"/>
</dbReference>
<dbReference type="GO" id="GO:0016075">
    <property type="term" value="P:rRNA catabolic process"/>
    <property type="evidence" value="ECO:0007669"/>
    <property type="project" value="UniProtKB-UniRule"/>
</dbReference>
<dbReference type="GO" id="GO:0006364">
    <property type="term" value="P:rRNA processing"/>
    <property type="evidence" value="ECO:0007669"/>
    <property type="project" value="UniProtKB-KW"/>
</dbReference>
<dbReference type="GO" id="GO:0008033">
    <property type="term" value="P:tRNA processing"/>
    <property type="evidence" value="ECO:0007669"/>
    <property type="project" value="UniProtKB-UniRule"/>
</dbReference>
<dbReference type="CDD" id="cd11362">
    <property type="entry name" value="RNase_PH_bact"/>
    <property type="match status" value="1"/>
</dbReference>
<dbReference type="FunFam" id="3.30.230.70:FF:000003">
    <property type="entry name" value="Ribonuclease PH"/>
    <property type="match status" value="1"/>
</dbReference>
<dbReference type="Gene3D" id="3.30.230.70">
    <property type="entry name" value="GHMP Kinase, N-terminal domain"/>
    <property type="match status" value="1"/>
</dbReference>
<dbReference type="HAMAP" id="MF_00564">
    <property type="entry name" value="RNase_PH"/>
    <property type="match status" value="1"/>
</dbReference>
<dbReference type="InterPro" id="IPR001247">
    <property type="entry name" value="ExoRNase_PH_dom1"/>
</dbReference>
<dbReference type="InterPro" id="IPR015847">
    <property type="entry name" value="ExoRNase_PH_dom2"/>
</dbReference>
<dbReference type="InterPro" id="IPR036345">
    <property type="entry name" value="ExoRNase_PH_dom2_sf"/>
</dbReference>
<dbReference type="InterPro" id="IPR027408">
    <property type="entry name" value="PNPase/RNase_PH_dom_sf"/>
</dbReference>
<dbReference type="InterPro" id="IPR020568">
    <property type="entry name" value="Ribosomal_Su5_D2-typ_SF"/>
</dbReference>
<dbReference type="InterPro" id="IPR050080">
    <property type="entry name" value="RNase_PH"/>
</dbReference>
<dbReference type="InterPro" id="IPR002381">
    <property type="entry name" value="RNase_PH_bac-type"/>
</dbReference>
<dbReference type="InterPro" id="IPR018336">
    <property type="entry name" value="RNase_PH_CS"/>
</dbReference>
<dbReference type="NCBIfam" id="TIGR01966">
    <property type="entry name" value="RNasePH"/>
    <property type="match status" value="1"/>
</dbReference>
<dbReference type="PANTHER" id="PTHR11953">
    <property type="entry name" value="EXOSOME COMPLEX COMPONENT"/>
    <property type="match status" value="1"/>
</dbReference>
<dbReference type="PANTHER" id="PTHR11953:SF0">
    <property type="entry name" value="EXOSOME COMPLEX COMPONENT RRP41"/>
    <property type="match status" value="1"/>
</dbReference>
<dbReference type="Pfam" id="PF01138">
    <property type="entry name" value="RNase_PH"/>
    <property type="match status" value="1"/>
</dbReference>
<dbReference type="Pfam" id="PF03725">
    <property type="entry name" value="RNase_PH_C"/>
    <property type="match status" value="1"/>
</dbReference>
<dbReference type="SUPFAM" id="SSF55666">
    <property type="entry name" value="Ribonuclease PH domain 2-like"/>
    <property type="match status" value="1"/>
</dbReference>
<dbReference type="SUPFAM" id="SSF54211">
    <property type="entry name" value="Ribosomal protein S5 domain 2-like"/>
    <property type="match status" value="1"/>
</dbReference>
<dbReference type="PROSITE" id="PS01277">
    <property type="entry name" value="RIBONUCLEASE_PH"/>
    <property type="match status" value="1"/>
</dbReference>
<protein>
    <recommendedName>
        <fullName evidence="1">Ribonuclease PH</fullName>
        <shortName evidence="1">RNase PH</shortName>
        <ecNumber evidence="1">2.7.7.56</ecNumber>
    </recommendedName>
    <alternativeName>
        <fullName evidence="1">tRNA nucleotidyltransferase</fullName>
    </alternativeName>
</protein>
<proteinExistence type="inferred from homology"/>
<gene>
    <name evidence="1" type="primary">rph</name>
    <name type="ordered locus">AZOSEA12910</name>
    <name type="ORF">c1A232</name>
</gene>